<accession>Q720E5</accession>
<sequence length="434" mass="47852">MEKSVNVIGAGLAGSEAAWQLVKRGVKVDLYEMRPVKQTPAHHTDKFAELVCTNSLRANGLTNAVGVIKEEMRILDSIIIEAADKASVPAGGALAVDRHEFSGYITDKVKNHPLVTVHTEEVTTIPEGPTIIATGPLTSPALADEIKQLTGEEYLYFYDAAAPIIEKDSIDMDKVYLKSRYDKGEAAYLNCPMSEEEFNAFYEALVTAETAALKEFEKEVFFEGCMPIEVMAKRGIKTMLFGPLKPVGLEDPKTGKRPYAVLQLRQDDAAGTLYNMVGFQTHLKWGEQKRVFGMIPGLENAEIVRYGVMHRNTFINSPTVLEPTYQLKTRNDLFFAGQMTGVEGYVESAASGLAAGINAANFVEEKELVVFPAETAIGSLAHYITSASKKSFQPMNVNFGLFPELETKIRAKQERNEKLAERALNAIKRVAEEL</sequence>
<organism>
    <name type="scientific">Listeria monocytogenes serotype 4b (strain F2365)</name>
    <dbReference type="NCBI Taxonomy" id="265669"/>
    <lineage>
        <taxon>Bacteria</taxon>
        <taxon>Bacillati</taxon>
        <taxon>Bacillota</taxon>
        <taxon>Bacilli</taxon>
        <taxon>Bacillales</taxon>
        <taxon>Listeriaceae</taxon>
        <taxon>Listeria</taxon>
    </lineage>
</organism>
<evidence type="ECO:0000255" key="1">
    <source>
        <dbReference type="HAMAP-Rule" id="MF_01037"/>
    </source>
</evidence>
<reference key="1">
    <citation type="journal article" date="2004" name="Nucleic Acids Res.">
        <title>Whole genome comparisons of serotype 4b and 1/2a strains of the food-borne pathogen Listeria monocytogenes reveal new insights into the core genome components of this species.</title>
        <authorList>
            <person name="Nelson K.E."/>
            <person name="Fouts D.E."/>
            <person name="Mongodin E.F."/>
            <person name="Ravel J."/>
            <person name="DeBoy R.T."/>
            <person name="Kolonay J.F."/>
            <person name="Rasko D.A."/>
            <person name="Angiuoli S.V."/>
            <person name="Gill S.R."/>
            <person name="Paulsen I.T."/>
            <person name="Peterson J.D."/>
            <person name="White O."/>
            <person name="Nelson W.C."/>
            <person name="Nierman W.C."/>
            <person name="Beanan M.J."/>
            <person name="Brinkac L.M."/>
            <person name="Daugherty S.C."/>
            <person name="Dodson R.J."/>
            <person name="Durkin A.S."/>
            <person name="Madupu R."/>
            <person name="Haft D.H."/>
            <person name="Selengut J."/>
            <person name="Van Aken S.E."/>
            <person name="Khouri H.M."/>
            <person name="Fedorova N."/>
            <person name="Forberger H.A."/>
            <person name="Tran B."/>
            <person name="Kathariou S."/>
            <person name="Wonderling L.D."/>
            <person name="Uhlich G.A."/>
            <person name="Bayles D.O."/>
            <person name="Luchansky J.B."/>
            <person name="Fraser C.M."/>
        </authorList>
    </citation>
    <scope>NUCLEOTIDE SEQUENCE [LARGE SCALE GENOMIC DNA]</scope>
    <source>
        <strain>F2365</strain>
    </source>
</reference>
<proteinExistence type="inferred from homology"/>
<dbReference type="EC" id="2.1.1.74" evidence="1"/>
<dbReference type="EMBL" id="AE017262">
    <property type="protein sequence ID" value="AAT04069.1"/>
    <property type="molecule type" value="Genomic_DNA"/>
</dbReference>
<dbReference type="RefSeq" id="WP_003727516.1">
    <property type="nucleotide sequence ID" value="NC_002973.6"/>
</dbReference>
<dbReference type="SMR" id="Q720E5"/>
<dbReference type="KEGG" id="lmf:LMOf2365_1294"/>
<dbReference type="HOGENOM" id="CLU_033057_1_0_9"/>
<dbReference type="GO" id="GO:0005829">
    <property type="term" value="C:cytosol"/>
    <property type="evidence" value="ECO:0007669"/>
    <property type="project" value="TreeGrafter"/>
</dbReference>
<dbReference type="GO" id="GO:0050660">
    <property type="term" value="F:flavin adenine dinucleotide binding"/>
    <property type="evidence" value="ECO:0007669"/>
    <property type="project" value="UniProtKB-UniRule"/>
</dbReference>
<dbReference type="GO" id="GO:0047151">
    <property type="term" value="F:tRNA (uracil(54)-C5)-methyltransferase activity, 5,10-methylenetetrahydrofolate-dependent"/>
    <property type="evidence" value="ECO:0007669"/>
    <property type="project" value="UniProtKB-UniRule"/>
</dbReference>
<dbReference type="GO" id="GO:0030488">
    <property type="term" value="P:tRNA methylation"/>
    <property type="evidence" value="ECO:0007669"/>
    <property type="project" value="TreeGrafter"/>
</dbReference>
<dbReference type="GO" id="GO:0002098">
    <property type="term" value="P:tRNA wobble uridine modification"/>
    <property type="evidence" value="ECO:0007669"/>
    <property type="project" value="TreeGrafter"/>
</dbReference>
<dbReference type="FunFam" id="3.50.50.60:FF:000035">
    <property type="entry name" value="Methylenetetrahydrofolate--tRNA-(uracil-5-)-methyltransferase TrmFO"/>
    <property type="match status" value="1"/>
</dbReference>
<dbReference type="FunFam" id="3.50.50.60:FF:000040">
    <property type="entry name" value="Methylenetetrahydrofolate--tRNA-(uracil-5-)-methyltransferase TrmFO"/>
    <property type="match status" value="1"/>
</dbReference>
<dbReference type="Gene3D" id="3.50.50.60">
    <property type="entry name" value="FAD/NAD(P)-binding domain"/>
    <property type="match status" value="2"/>
</dbReference>
<dbReference type="HAMAP" id="MF_01037">
    <property type="entry name" value="TrmFO"/>
    <property type="match status" value="1"/>
</dbReference>
<dbReference type="InterPro" id="IPR036188">
    <property type="entry name" value="FAD/NAD-bd_sf"/>
</dbReference>
<dbReference type="InterPro" id="IPR002218">
    <property type="entry name" value="MnmG-rel"/>
</dbReference>
<dbReference type="InterPro" id="IPR020595">
    <property type="entry name" value="MnmG-rel_CS"/>
</dbReference>
<dbReference type="InterPro" id="IPR040131">
    <property type="entry name" value="MnmG_N"/>
</dbReference>
<dbReference type="InterPro" id="IPR004417">
    <property type="entry name" value="TrmFO"/>
</dbReference>
<dbReference type="NCBIfam" id="TIGR00137">
    <property type="entry name" value="gid_trmFO"/>
    <property type="match status" value="1"/>
</dbReference>
<dbReference type="NCBIfam" id="NF003739">
    <property type="entry name" value="PRK05335.1"/>
    <property type="match status" value="1"/>
</dbReference>
<dbReference type="PANTHER" id="PTHR11806">
    <property type="entry name" value="GLUCOSE INHIBITED DIVISION PROTEIN A"/>
    <property type="match status" value="1"/>
</dbReference>
<dbReference type="PANTHER" id="PTHR11806:SF2">
    <property type="entry name" value="METHYLENETETRAHYDROFOLATE--TRNA-(URACIL-5-)-METHYLTRANSFERASE TRMFO"/>
    <property type="match status" value="1"/>
</dbReference>
<dbReference type="Pfam" id="PF01134">
    <property type="entry name" value="GIDA"/>
    <property type="match status" value="1"/>
</dbReference>
<dbReference type="SUPFAM" id="SSF51905">
    <property type="entry name" value="FAD/NAD(P)-binding domain"/>
    <property type="match status" value="1"/>
</dbReference>
<dbReference type="PROSITE" id="PS01281">
    <property type="entry name" value="GIDA_2"/>
    <property type="match status" value="1"/>
</dbReference>
<keyword id="KW-0963">Cytoplasm</keyword>
<keyword id="KW-0274">FAD</keyword>
<keyword id="KW-0285">Flavoprotein</keyword>
<keyword id="KW-0489">Methyltransferase</keyword>
<keyword id="KW-0520">NAD</keyword>
<keyword id="KW-0521">NADP</keyword>
<keyword id="KW-0808">Transferase</keyword>
<keyword id="KW-0819">tRNA processing</keyword>
<name>TRMFO_LISMF</name>
<comment type="function">
    <text evidence="1">Catalyzes the folate-dependent formation of 5-methyl-uridine at position 54 (M-5-U54) in all tRNAs.</text>
</comment>
<comment type="catalytic activity">
    <reaction evidence="1">
        <text>uridine(54) in tRNA + (6R)-5,10-methylene-5,6,7,8-tetrahydrofolate + NADH + H(+) = 5-methyluridine(54) in tRNA + (6S)-5,6,7,8-tetrahydrofolate + NAD(+)</text>
        <dbReference type="Rhea" id="RHEA:16873"/>
        <dbReference type="Rhea" id="RHEA-COMP:10167"/>
        <dbReference type="Rhea" id="RHEA-COMP:10193"/>
        <dbReference type="ChEBI" id="CHEBI:15378"/>
        <dbReference type="ChEBI" id="CHEBI:15636"/>
        <dbReference type="ChEBI" id="CHEBI:57453"/>
        <dbReference type="ChEBI" id="CHEBI:57540"/>
        <dbReference type="ChEBI" id="CHEBI:57945"/>
        <dbReference type="ChEBI" id="CHEBI:65315"/>
        <dbReference type="ChEBI" id="CHEBI:74447"/>
        <dbReference type="EC" id="2.1.1.74"/>
    </reaction>
</comment>
<comment type="catalytic activity">
    <reaction evidence="1">
        <text>uridine(54) in tRNA + (6R)-5,10-methylene-5,6,7,8-tetrahydrofolate + NADPH + H(+) = 5-methyluridine(54) in tRNA + (6S)-5,6,7,8-tetrahydrofolate + NADP(+)</text>
        <dbReference type="Rhea" id="RHEA:62372"/>
        <dbReference type="Rhea" id="RHEA-COMP:10167"/>
        <dbReference type="Rhea" id="RHEA-COMP:10193"/>
        <dbReference type="ChEBI" id="CHEBI:15378"/>
        <dbReference type="ChEBI" id="CHEBI:15636"/>
        <dbReference type="ChEBI" id="CHEBI:57453"/>
        <dbReference type="ChEBI" id="CHEBI:57783"/>
        <dbReference type="ChEBI" id="CHEBI:58349"/>
        <dbReference type="ChEBI" id="CHEBI:65315"/>
        <dbReference type="ChEBI" id="CHEBI:74447"/>
        <dbReference type="EC" id="2.1.1.74"/>
    </reaction>
</comment>
<comment type="cofactor">
    <cofactor evidence="1">
        <name>FAD</name>
        <dbReference type="ChEBI" id="CHEBI:57692"/>
    </cofactor>
</comment>
<comment type="subcellular location">
    <subcellularLocation>
        <location evidence="1">Cytoplasm</location>
    </subcellularLocation>
</comment>
<comment type="similarity">
    <text evidence="1">Belongs to the MnmG family. TrmFO subfamily.</text>
</comment>
<feature type="chain" id="PRO_0000117252" description="Methylenetetrahydrofolate--tRNA-(uracil-5-)-methyltransferase TrmFO">
    <location>
        <begin position="1"/>
        <end position="434"/>
    </location>
</feature>
<feature type="binding site" evidence="1">
    <location>
        <begin position="9"/>
        <end position="14"/>
    </location>
    <ligand>
        <name>FAD</name>
        <dbReference type="ChEBI" id="CHEBI:57692"/>
    </ligand>
</feature>
<gene>
    <name evidence="1" type="primary">trmFO</name>
    <name type="synonym">gid</name>
    <name type="ordered locus">LMOf2365_1294</name>
</gene>
<protein>
    <recommendedName>
        <fullName evidence="1">Methylenetetrahydrofolate--tRNA-(uracil-5-)-methyltransferase TrmFO</fullName>
        <ecNumber evidence="1">2.1.1.74</ecNumber>
    </recommendedName>
    <alternativeName>
        <fullName evidence="1">Folate-dependent tRNA (uracil-5-)-methyltransferase</fullName>
    </alternativeName>
    <alternativeName>
        <fullName evidence="1">Folate-dependent tRNA(M-5-U54)-methyltransferase</fullName>
    </alternativeName>
</protein>